<comment type="function">
    <text evidence="1">Catalyzes the methylthiolation of an aspartic acid residue of ribosomal protein uS12.</text>
</comment>
<comment type="catalytic activity">
    <reaction evidence="1">
        <text>L-aspartate(89)-[ribosomal protein uS12]-hydrogen + (sulfur carrier)-SH + AH2 + 2 S-adenosyl-L-methionine = 3-methylsulfanyl-L-aspartate(89)-[ribosomal protein uS12]-hydrogen + (sulfur carrier)-H + 5'-deoxyadenosine + L-methionine + A + S-adenosyl-L-homocysteine + 2 H(+)</text>
        <dbReference type="Rhea" id="RHEA:37087"/>
        <dbReference type="Rhea" id="RHEA-COMP:10460"/>
        <dbReference type="Rhea" id="RHEA-COMP:10461"/>
        <dbReference type="Rhea" id="RHEA-COMP:14737"/>
        <dbReference type="Rhea" id="RHEA-COMP:14739"/>
        <dbReference type="ChEBI" id="CHEBI:13193"/>
        <dbReference type="ChEBI" id="CHEBI:15378"/>
        <dbReference type="ChEBI" id="CHEBI:17319"/>
        <dbReference type="ChEBI" id="CHEBI:17499"/>
        <dbReference type="ChEBI" id="CHEBI:29917"/>
        <dbReference type="ChEBI" id="CHEBI:29961"/>
        <dbReference type="ChEBI" id="CHEBI:57844"/>
        <dbReference type="ChEBI" id="CHEBI:57856"/>
        <dbReference type="ChEBI" id="CHEBI:59789"/>
        <dbReference type="ChEBI" id="CHEBI:64428"/>
        <dbReference type="ChEBI" id="CHEBI:73599"/>
        <dbReference type="EC" id="2.8.4.4"/>
    </reaction>
</comment>
<comment type="cofactor">
    <cofactor evidence="1">
        <name>[4Fe-4S] cluster</name>
        <dbReference type="ChEBI" id="CHEBI:49883"/>
    </cofactor>
    <text evidence="1">Binds 2 [4Fe-4S] clusters. One cluster is coordinated with 3 cysteines and an exchangeable S-adenosyl-L-methionine.</text>
</comment>
<comment type="subcellular location">
    <subcellularLocation>
        <location evidence="1">Cytoplasm</location>
    </subcellularLocation>
</comment>
<comment type="similarity">
    <text evidence="1">Belongs to the methylthiotransferase family. RimO subfamily.</text>
</comment>
<sequence length="442" mass="49489">MSNTKQAPKVGFVSLGCPKNLVDSERILTQLRTEGYDVVPSYDDAEVVVVNTCGFIDSAVQESLEAIGEALAENGKVIVTGCLGAKENQIREIHPKVLEITGPHAYEEVLGHVHKYVEKPTHNPFTSLVPAQGVKLTPRHYAYLKISEGCNHRCTFCIIPSMRGDLVSRPIGEVLAEAKRLKEAGVKEILVISQDTSAYGVDVKHRTGFYDGMPVKTSMVALCEELAKLGMWVRLHYVYPYPHVDDVIPLMRDGKVLPYLDIPLQHASPRILKLMKRPGTVERTLERIQKWREICPEITLRSTFIVGFPGETEEEFQMLLDFIDKAELDRVGCFKYSPVEGAKANELPDPVPEEVQEERFQRFMELQQQVSIRKLARKVGKEMLVLIDEVDEEGATGRSAADAPEIDGLVYLNGETGLKPGDMVKVRIDEADEYDLWASLID</sequence>
<keyword id="KW-0004">4Fe-4S</keyword>
<keyword id="KW-0963">Cytoplasm</keyword>
<keyword id="KW-0408">Iron</keyword>
<keyword id="KW-0411">Iron-sulfur</keyword>
<keyword id="KW-0479">Metal-binding</keyword>
<keyword id="KW-1185">Reference proteome</keyword>
<keyword id="KW-0949">S-adenosyl-L-methionine</keyword>
<keyword id="KW-0808">Transferase</keyword>
<gene>
    <name evidence="1" type="primary">rimO</name>
    <name type="ordered locus">AHA_1361</name>
</gene>
<dbReference type="EC" id="2.8.4.4" evidence="1"/>
<dbReference type="EMBL" id="CP000462">
    <property type="protein sequence ID" value="ABK35826.1"/>
    <property type="molecule type" value="Genomic_DNA"/>
</dbReference>
<dbReference type="RefSeq" id="WP_011705268.1">
    <property type="nucleotide sequence ID" value="NC_008570.1"/>
</dbReference>
<dbReference type="RefSeq" id="YP_855900.1">
    <property type="nucleotide sequence ID" value="NC_008570.1"/>
</dbReference>
<dbReference type="SMR" id="A0KHZ9"/>
<dbReference type="STRING" id="380703.AHA_1361"/>
<dbReference type="EnsemblBacteria" id="ABK35826">
    <property type="protein sequence ID" value="ABK35826"/>
    <property type="gene ID" value="AHA_1361"/>
</dbReference>
<dbReference type="GeneID" id="4489070"/>
<dbReference type="KEGG" id="aha:AHA_1361"/>
<dbReference type="PATRIC" id="fig|380703.7.peg.1369"/>
<dbReference type="eggNOG" id="COG0621">
    <property type="taxonomic scope" value="Bacteria"/>
</dbReference>
<dbReference type="HOGENOM" id="CLU_018697_0_0_6"/>
<dbReference type="OrthoDB" id="9805215at2"/>
<dbReference type="Proteomes" id="UP000000756">
    <property type="component" value="Chromosome"/>
</dbReference>
<dbReference type="GO" id="GO:0005829">
    <property type="term" value="C:cytosol"/>
    <property type="evidence" value="ECO:0007669"/>
    <property type="project" value="TreeGrafter"/>
</dbReference>
<dbReference type="GO" id="GO:0051539">
    <property type="term" value="F:4 iron, 4 sulfur cluster binding"/>
    <property type="evidence" value="ECO:0007669"/>
    <property type="project" value="UniProtKB-UniRule"/>
</dbReference>
<dbReference type="GO" id="GO:0035599">
    <property type="term" value="F:aspartic acid methylthiotransferase activity"/>
    <property type="evidence" value="ECO:0007669"/>
    <property type="project" value="TreeGrafter"/>
</dbReference>
<dbReference type="GO" id="GO:0046872">
    <property type="term" value="F:metal ion binding"/>
    <property type="evidence" value="ECO:0007669"/>
    <property type="project" value="UniProtKB-KW"/>
</dbReference>
<dbReference type="GO" id="GO:0103039">
    <property type="term" value="F:protein methylthiotransferase activity"/>
    <property type="evidence" value="ECO:0007669"/>
    <property type="project" value="UniProtKB-EC"/>
</dbReference>
<dbReference type="GO" id="GO:0006400">
    <property type="term" value="P:tRNA modification"/>
    <property type="evidence" value="ECO:0007669"/>
    <property type="project" value="InterPro"/>
</dbReference>
<dbReference type="CDD" id="cd01335">
    <property type="entry name" value="Radical_SAM"/>
    <property type="match status" value="1"/>
</dbReference>
<dbReference type="FunFam" id="2.40.50.140:FF:000060">
    <property type="entry name" value="Ribosomal protein S12 methylthiotransferase RimO"/>
    <property type="match status" value="1"/>
</dbReference>
<dbReference type="FunFam" id="3.40.50.12160:FF:000002">
    <property type="entry name" value="Ribosomal protein S12 methylthiotransferase RimO"/>
    <property type="match status" value="1"/>
</dbReference>
<dbReference type="FunFam" id="3.80.30.20:FF:000001">
    <property type="entry name" value="tRNA-2-methylthio-N(6)-dimethylallyladenosine synthase 2"/>
    <property type="match status" value="1"/>
</dbReference>
<dbReference type="Gene3D" id="3.40.50.12160">
    <property type="entry name" value="Methylthiotransferase, N-terminal domain"/>
    <property type="match status" value="1"/>
</dbReference>
<dbReference type="Gene3D" id="2.40.50.140">
    <property type="entry name" value="Nucleic acid-binding proteins"/>
    <property type="match status" value="1"/>
</dbReference>
<dbReference type="Gene3D" id="3.80.30.20">
    <property type="entry name" value="tm_1862 like domain"/>
    <property type="match status" value="1"/>
</dbReference>
<dbReference type="HAMAP" id="MF_01865">
    <property type="entry name" value="MTTase_RimO"/>
    <property type="match status" value="1"/>
</dbReference>
<dbReference type="InterPro" id="IPR006638">
    <property type="entry name" value="Elp3/MiaA/NifB-like_rSAM"/>
</dbReference>
<dbReference type="InterPro" id="IPR005839">
    <property type="entry name" value="Methylthiotransferase"/>
</dbReference>
<dbReference type="InterPro" id="IPR020612">
    <property type="entry name" value="Methylthiotransferase_CS"/>
</dbReference>
<dbReference type="InterPro" id="IPR013848">
    <property type="entry name" value="Methylthiotransferase_N"/>
</dbReference>
<dbReference type="InterPro" id="IPR038135">
    <property type="entry name" value="Methylthiotransferase_N_sf"/>
</dbReference>
<dbReference type="InterPro" id="IPR012340">
    <property type="entry name" value="NA-bd_OB-fold"/>
</dbReference>
<dbReference type="InterPro" id="IPR005840">
    <property type="entry name" value="Ribosomal_uS12_MeSTrfase_RimO"/>
</dbReference>
<dbReference type="InterPro" id="IPR007197">
    <property type="entry name" value="rSAM"/>
</dbReference>
<dbReference type="InterPro" id="IPR023404">
    <property type="entry name" value="rSAM_horseshoe"/>
</dbReference>
<dbReference type="InterPro" id="IPR002792">
    <property type="entry name" value="TRAM_dom"/>
</dbReference>
<dbReference type="NCBIfam" id="TIGR01125">
    <property type="entry name" value="30S ribosomal protein S12 methylthiotransferase RimO"/>
    <property type="match status" value="1"/>
</dbReference>
<dbReference type="NCBIfam" id="TIGR00089">
    <property type="entry name" value="MiaB/RimO family radical SAM methylthiotransferase"/>
    <property type="match status" value="1"/>
</dbReference>
<dbReference type="PANTHER" id="PTHR43837">
    <property type="entry name" value="RIBOSOMAL PROTEIN S12 METHYLTHIOTRANSFERASE RIMO"/>
    <property type="match status" value="1"/>
</dbReference>
<dbReference type="PANTHER" id="PTHR43837:SF1">
    <property type="entry name" value="RIBOSOMAL PROTEIN US12 METHYLTHIOTRANSFERASE RIMO"/>
    <property type="match status" value="1"/>
</dbReference>
<dbReference type="Pfam" id="PF04055">
    <property type="entry name" value="Radical_SAM"/>
    <property type="match status" value="1"/>
</dbReference>
<dbReference type="Pfam" id="PF18693">
    <property type="entry name" value="TRAM_2"/>
    <property type="match status" value="1"/>
</dbReference>
<dbReference type="Pfam" id="PF00919">
    <property type="entry name" value="UPF0004"/>
    <property type="match status" value="1"/>
</dbReference>
<dbReference type="SFLD" id="SFLDG01082">
    <property type="entry name" value="B12-binding_domain_containing"/>
    <property type="match status" value="1"/>
</dbReference>
<dbReference type="SFLD" id="SFLDG01061">
    <property type="entry name" value="methylthiotransferase"/>
    <property type="match status" value="1"/>
</dbReference>
<dbReference type="SFLD" id="SFLDF00274">
    <property type="entry name" value="ribosomal_protein_S12_methylth"/>
    <property type="match status" value="1"/>
</dbReference>
<dbReference type="SMART" id="SM00729">
    <property type="entry name" value="Elp3"/>
    <property type="match status" value="1"/>
</dbReference>
<dbReference type="SUPFAM" id="SSF102114">
    <property type="entry name" value="Radical SAM enzymes"/>
    <property type="match status" value="1"/>
</dbReference>
<dbReference type="PROSITE" id="PS51449">
    <property type="entry name" value="MTTASE_N"/>
    <property type="match status" value="1"/>
</dbReference>
<dbReference type="PROSITE" id="PS01278">
    <property type="entry name" value="MTTASE_RADICAL"/>
    <property type="match status" value="1"/>
</dbReference>
<dbReference type="PROSITE" id="PS51918">
    <property type="entry name" value="RADICAL_SAM"/>
    <property type="match status" value="1"/>
</dbReference>
<dbReference type="PROSITE" id="PS50926">
    <property type="entry name" value="TRAM"/>
    <property type="match status" value="1"/>
</dbReference>
<protein>
    <recommendedName>
        <fullName evidence="1">Ribosomal protein uS12 methylthiotransferase RimO</fullName>
        <shortName evidence="1">uS12 MTTase</shortName>
        <shortName evidence="1">uS12 methylthiotransferase</shortName>
        <ecNumber evidence="1">2.8.4.4</ecNumber>
    </recommendedName>
    <alternativeName>
        <fullName evidence="1">Ribosomal protein uS12 (aspartate-C(3))-methylthiotransferase</fullName>
    </alternativeName>
    <alternativeName>
        <fullName evidence="1">Ribosome maturation factor RimO</fullName>
    </alternativeName>
</protein>
<feature type="chain" id="PRO_0000374689" description="Ribosomal protein uS12 methylthiotransferase RimO">
    <location>
        <begin position="1"/>
        <end position="442"/>
    </location>
</feature>
<feature type="domain" description="MTTase N-terminal" evidence="1">
    <location>
        <begin position="8"/>
        <end position="118"/>
    </location>
</feature>
<feature type="domain" description="Radical SAM core" evidence="2">
    <location>
        <begin position="136"/>
        <end position="373"/>
    </location>
</feature>
<feature type="domain" description="TRAM" evidence="1">
    <location>
        <begin position="376"/>
        <end position="442"/>
    </location>
</feature>
<feature type="binding site" evidence="1">
    <location>
        <position position="17"/>
    </location>
    <ligand>
        <name>[4Fe-4S] cluster</name>
        <dbReference type="ChEBI" id="CHEBI:49883"/>
        <label>1</label>
    </ligand>
</feature>
<feature type="binding site" evidence="1">
    <location>
        <position position="53"/>
    </location>
    <ligand>
        <name>[4Fe-4S] cluster</name>
        <dbReference type="ChEBI" id="CHEBI:49883"/>
        <label>1</label>
    </ligand>
</feature>
<feature type="binding site" evidence="1">
    <location>
        <position position="82"/>
    </location>
    <ligand>
        <name>[4Fe-4S] cluster</name>
        <dbReference type="ChEBI" id="CHEBI:49883"/>
        <label>1</label>
    </ligand>
</feature>
<feature type="binding site" evidence="1">
    <location>
        <position position="150"/>
    </location>
    <ligand>
        <name>[4Fe-4S] cluster</name>
        <dbReference type="ChEBI" id="CHEBI:49883"/>
        <label>2</label>
        <note>4Fe-4S-S-AdoMet</note>
    </ligand>
</feature>
<feature type="binding site" evidence="1">
    <location>
        <position position="154"/>
    </location>
    <ligand>
        <name>[4Fe-4S] cluster</name>
        <dbReference type="ChEBI" id="CHEBI:49883"/>
        <label>2</label>
        <note>4Fe-4S-S-AdoMet</note>
    </ligand>
</feature>
<feature type="binding site" evidence="1">
    <location>
        <position position="157"/>
    </location>
    <ligand>
        <name>[4Fe-4S] cluster</name>
        <dbReference type="ChEBI" id="CHEBI:49883"/>
        <label>2</label>
        <note>4Fe-4S-S-AdoMet</note>
    </ligand>
</feature>
<reference key="1">
    <citation type="journal article" date="2006" name="J. Bacteriol.">
        <title>Genome sequence of Aeromonas hydrophila ATCC 7966T: jack of all trades.</title>
        <authorList>
            <person name="Seshadri R."/>
            <person name="Joseph S.W."/>
            <person name="Chopra A.K."/>
            <person name="Sha J."/>
            <person name="Shaw J."/>
            <person name="Graf J."/>
            <person name="Haft D.H."/>
            <person name="Wu M."/>
            <person name="Ren Q."/>
            <person name="Rosovitz M.J."/>
            <person name="Madupu R."/>
            <person name="Tallon L."/>
            <person name="Kim M."/>
            <person name="Jin S."/>
            <person name="Vuong H."/>
            <person name="Stine O.C."/>
            <person name="Ali A."/>
            <person name="Horneman A.J."/>
            <person name="Heidelberg J.F."/>
        </authorList>
    </citation>
    <scope>NUCLEOTIDE SEQUENCE [LARGE SCALE GENOMIC DNA]</scope>
    <source>
        <strain>ATCC 7966 / DSM 30187 / BCRC 13018 / CCUG 14551 / JCM 1027 / KCTC 2358 / NCIMB 9240 / NCTC 8049</strain>
    </source>
</reference>
<organism>
    <name type="scientific">Aeromonas hydrophila subsp. hydrophila (strain ATCC 7966 / DSM 30187 / BCRC 13018 / CCUG 14551 / JCM 1027 / KCTC 2358 / NCIMB 9240 / NCTC 8049)</name>
    <dbReference type="NCBI Taxonomy" id="380703"/>
    <lineage>
        <taxon>Bacteria</taxon>
        <taxon>Pseudomonadati</taxon>
        <taxon>Pseudomonadota</taxon>
        <taxon>Gammaproteobacteria</taxon>
        <taxon>Aeromonadales</taxon>
        <taxon>Aeromonadaceae</taxon>
        <taxon>Aeromonas</taxon>
    </lineage>
</organism>
<name>RIMO_AERHH</name>
<accession>A0KHZ9</accession>
<evidence type="ECO:0000255" key="1">
    <source>
        <dbReference type="HAMAP-Rule" id="MF_01865"/>
    </source>
</evidence>
<evidence type="ECO:0000255" key="2">
    <source>
        <dbReference type="PROSITE-ProRule" id="PRU01266"/>
    </source>
</evidence>
<proteinExistence type="inferred from homology"/>